<proteinExistence type="inferred from homology"/>
<gene>
    <name evidence="1" type="primary">pyrD</name>
    <name type="ordered locus">Deide_18190</name>
</gene>
<name>PYRD_DEIDV</name>
<sequence length="360" mass="38239">MYRRVIKPALFRLDAEDAHHLTVNALALMSRLPGWPAAARRLSAPADSRLMQTLWGHTYASPVGLAAGLDKNGVAVPAFSALGFGFVEVGTVTPQPQPGNDRPRLFRLPPDEALINRMGFNNAGAAALRGQLSRLGRRTVPVWVNIGKNKLTEEAAQDYVACVQELYDVADAFVVNVSSPNTPGLRALQASAELEALLRAVLNETEAQRLRTARRAPPVLVKLAPDLHPADFEASVQGALNAGVQGLIVSNTTLSRDGLTHAHREQAGGLSGRPLTGRSTALVQDAYRLTRGAVPVVGVGGIFSADDAYAKIRAGASLVEVYSSLIYEGPGLPARIHRGLGQLLERDGISHVRDAVGADA</sequence>
<organism>
    <name type="scientific">Deinococcus deserti (strain DSM 17065 / CIP 109153 / LMG 22923 / VCD115)</name>
    <dbReference type="NCBI Taxonomy" id="546414"/>
    <lineage>
        <taxon>Bacteria</taxon>
        <taxon>Thermotogati</taxon>
        <taxon>Deinococcota</taxon>
        <taxon>Deinococci</taxon>
        <taxon>Deinococcales</taxon>
        <taxon>Deinococcaceae</taxon>
        <taxon>Deinococcus</taxon>
    </lineage>
</organism>
<feature type="chain" id="PRO_1000204313" description="Dihydroorotate dehydrogenase (quinone)">
    <location>
        <begin position="1"/>
        <end position="360"/>
    </location>
</feature>
<feature type="active site" description="Nucleophile" evidence="1">
    <location>
        <position position="179"/>
    </location>
</feature>
<feature type="binding site" evidence="1">
    <location>
        <begin position="67"/>
        <end position="71"/>
    </location>
    <ligand>
        <name>FMN</name>
        <dbReference type="ChEBI" id="CHEBI:58210"/>
    </ligand>
</feature>
<feature type="binding site" evidence="1">
    <location>
        <position position="71"/>
    </location>
    <ligand>
        <name>substrate</name>
    </ligand>
</feature>
<feature type="binding site" evidence="1">
    <location>
        <position position="91"/>
    </location>
    <ligand>
        <name>FMN</name>
        <dbReference type="ChEBI" id="CHEBI:58210"/>
    </ligand>
</feature>
<feature type="binding site" evidence="1">
    <location>
        <begin position="116"/>
        <end position="120"/>
    </location>
    <ligand>
        <name>substrate</name>
    </ligand>
</feature>
<feature type="binding site" evidence="1">
    <location>
        <position position="145"/>
    </location>
    <ligand>
        <name>FMN</name>
        <dbReference type="ChEBI" id="CHEBI:58210"/>
    </ligand>
</feature>
<feature type="binding site" evidence="1">
    <location>
        <position position="176"/>
    </location>
    <ligand>
        <name>FMN</name>
        <dbReference type="ChEBI" id="CHEBI:58210"/>
    </ligand>
</feature>
<feature type="binding site" evidence="1">
    <location>
        <position position="176"/>
    </location>
    <ligand>
        <name>substrate</name>
    </ligand>
</feature>
<feature type="binding site" evidence="1">
    <location>
        <position position="181"/>
    </location>
    <ligand>
        <name>substrate</name>
    </ligand>
</feature>
<feature type="binding site" evidence="1">
    <location>
        <position position="222"/>
    </location>
    <ligand>
        <name>FMN</name>
        <dbReference type="ChEBI" id="CHEBI:58210"/>
    </ligand>
</feature>
<feature type="binding site" evidence="1">
    <location>
        <position position="250"/>
    </location>
    <ligand>
        <name>FMN</name>
        <dbReference type="ChEBI" id="CHEBI:58210"/>
    </ligand>
</feature>
<feature type="binding site" evidence="1">
    <location>
        <begin position="251"/>
        <end position="252"/>
    </location>
    <ligand>
        <name>substrate</name>
    </ligand>
</feature>
<feature type="binding site" evidence="1">
    <location>
        <position position="272"/>
    </location>
    <ligand>
        <name>FMN</name>
        <dbReference type="ChEBI" id="CHEBI:58210"/>
    </ligand>
</feature>
<feature type="binding site" evidence="1">
    <location>
        <position position="301"/>
    </location>
    <ligand>
        <name>FMN</name>
        <dbReference type="ChEBI" id="CHEBI:58210"/>
    </ligand>
</feature>
<feature type="binding site" evidence="1">
    <location>
        <begin position="322"/>
        <end position="323"/>
    </location>
    <ligand>
        <name>FMN</name>
        <dbReference type="ChEBI" id="CHEBI:58210"/>
    </ligand>
</feature>
<dbReference type="EC" id="1.3.5.2" evidence="1"/>
<dbReference type="EMBL" id="CP001114">
    <property type="protein sequence ID" value="ACO46806.1"/>
    <property type="molecule type" value="Genomic_DNA"/>
</dbReference>
<dbReference type="RefSeq" id="WP_012693928.1">
    <property type="nucleotide sequence ID" value="NC_012526.1"/>
</dbReference>
<dbReference type="SMR" id="C1CX89"/>
<dbReference type="STRING" id="546414.Deide_18190"/>
<dbReference type="PaxDb" id="546414-Deide_18190"/>
<dbReference type="KEGG" id="ddr:Deide_18190"/>
<dbReference type="eggNOG" id="COG0167">
    <property type="taxonomic scope" value="Bacteria"/>
</dbReference>
<dbReference type="HOGENOM" id="CLU_013640_2_0_0"/>
<dbReference type="OrthoDB" id="9802377at2"/>
<dbReference type="UniPathway" id="UPA00070">
    <property type="reaction ID" value="UER00946"/>
</dbReference>
<dbReference type="Proteomes" id="UP000002208">
    <property type="component" value="Chromosome"/>
</dbReference>
<dbReference type="GO" id="GO:0005737">
    <property type="term" value="C:cytoplasm"/>
    <property type="evidence" value="ECO:0007669"/>
    <property type="project" value="InterPro"/>
</dbReference>
<dbReference type="GO" id="GO:0005886">
    <property type="term" value="C:plasma membrane"/>
    <property type="evidence" value="ECO:0007669"/>
    <property type="project" value="UniProtKB-SubCell"/>
</dbReference>
<dbReference type="GO" id="GO:0106430">
    <property type="term" value="F:dihydroorotate dehydrogenase (quinone) activity"/>
    <property type="evidence" value="ECO:0007669"/>
    <property type="project" value="UniProtKB-EC"/>
</dbReference>
<dbReference type="GO" id="GO:0006207">
    <property type="term" value="P:'de novo' pyrimidine nucleobase biosynthetic process"/>
    <property type="evidence" value="ECO:0007669"/>
    <property type="project" value="InterPro"/>
</dbReference>
<dbReference type="GO" id="GO:0044205">
    <property type="term" value="P:'de novo' UMP biosynthetic process"/>
    <property type="evidence" value="ECO:0007669"/>
    <property type="project" value="UniProtKB-UniRule"/>
</dbReference>
<dbReference type="CDD" id="cd04738">
    <property type="entry name" value="DHOD_2_like"/>
    <property type="match status" value="1"/>
</dbReference>
<dbReference type="Gene3D" id="3.20.20.70">
    <property type="entry name" value="Aldolase class I"/>
    <property type="match status" value="1"/>
</dbReference>
<dbReference type="HAMAP" id="MF_00225">
    <property type="entry name" value="DHO_dh_type2"/>
    <property type="match status" value="1"/>
</dbReference>
<dbReference type="InterPro" id="IPR013785">
    <property type="entry name" value="Aldolase_TIM"/>
</dbReference>
<dbReference type="InterPro" id="IPR050074">
    <property type="entry name" value="DHO_dehydrogenase"/>
</dbReference>
<dbReference type="InterPro" id="IPR005719">
    <property type="entry name" value="Dihydroorotate_DH_2"/>
</dbReference>
<dbReference type="InterPro" id="IPR005720">
    <property type="entry name" value="Dihydroorotate_DH_cat"/>
</dbReference>
<dbReference type="InterPro" id="IPR001295">
    <property type="entry name" value="Dihydroorotate_DH_CS"/>
</dbReference>
<dbReference type="NCBIfam" id="NF003645">
    <property type="entry name" value="PRK05286.1-2"/>
    <property type="match status" value="1"/>
</dbReference>
<dbReference type="NCBIfam" id="NF003652">
    <property type="entry name" value="PRK05286.2-5"/>
    <property type="match status" value="1"/>
</dbReference>
<dbReference type="NCBIfam" id="TIGR01036">
    <property type="entry name" value="pyrD_sub2"/>
    <property type="match status" value="1"/>
</dbReference>
<dbReference type="PANTHER" id="PTHR48109:SF4">
    <property type="entry name" value="DIHYDROOROTATE DEHYDROGENASE (QUINONE), MITOCHONDRIAL"/>
    <property type="match status" value="1"/>
</dbReference>
<dbReference type="PANTHER" id="PTHR48109">
    <property type="entry name" value="DIHYDROOROTATE DEHYDROGENASE (QUINONE), MITOCHONDRIAL-RELATED"/>
    <property type="match status" value="1"/>
</dbReference>
<dbReference type="Pfam" id="PF01180">
    <property type="entry name" value="DHO_dh"/>
    <property type="match status" value="1"/>
</dbReference>
<dbReference type="SUPFAM" id="SSF51395">
    <property type="entry name" value="FMN-linked oxidoreductases"/>
    <property type="match status" value="1"/>
</dbReference>
<dbReference type="PROSITE" id="PS00911">
    <property type="entry name" value="DHODEHASE_1"/>
    <property type="match status" value="1"/>
</dbReference>
<dbReference type="PROSITE" id="PS00912">
    <property type="entry name" value="DHODEHASE_2"/>
    <property type="match status" value="1"/>
</dbReference>
<reference key="1">
    <citation type="journal article" date="2009" name="PLoS Genet.">
        <title>Alliance of proteomics and genomics to unravel the specificities of Sahara bacterium Deinococcus deserti.</title>
        <authorList>
            <person name="de Groot A."/>
            <person name="Dulermo R."/>
            <person name="Ortet P."/>
            <person name="Blanchard L."/>
            <person name="Guerin P."/>
            <person name="Fernandez B."/>
            <person name="Vacherie B."/>
            <person name="Dossat C."/>
            <person name="Jolivet E."/>
            <person name="Siguier P."/>
            <person name="Chandler M."/>
            <person name="Barakat M."/>
            <person name="Dedieu A."/>
            <person name="Barbe V."/>
            <person name="Heulin T."/>
            <person name="Sommer S."/>
            <person name="Achouak W."/>
            <person name="Armengaud J."/>
        </authorList>
    </citation>
    <scope>NUCLEOTIDE SEQUENCE [LARGE SCALE GENOMIC DNA]</scope>
    <source>
        <strain>DSM 17065 / CIP 109153 / LMG 22923 / VCD115</strain>
    </source>
</reference>
<keyword id="KW-1003">Cell membrane</keyword>
<keyword id="KW-0285">Flavoprotein</keyword>
<keyword id="KW-0288">FMN</keyword>
<keyword id="KW-0472">Membrane</keyword>
<keyword id="KW-0560">Oxidoreductase</keyword>
<keyword id="KW-0665">Pyrimidine biosynthesis</keyword>
<keyword id="KW-1185">Reference proteome</keyword>
<comment type="function">
    <text evidence="1">Catalyzes the conversion of dihydroorotate to orotate with quinone as electron acceptor.</text>
</comment>
<comment type="catalytic activity">
    <reaction evidence="1">
        <text>(S)-dihydroorotate + a quinone = orotate + a quinol</text>
        <dbReference type="Rhea" id="RHEA:30187"/>
        <dbReference type="ChEBI" id="CHEBI:24646"/>
        <dbReference type="ChEBI" id="CHEBI:30839"/>
        <dbReference type="ChEBI" id="CHEBI:30864"/>
        <dbReference type="ChEBI" id="CHEBI:132124"/>
        <dbReference type="EC" id="1.3.5.2"/>
    </reaction>
</comment>
<comment type="cofactor">
    <cofactor evidence="1">
        <name>FMN</name>
        <dbReference type="ChEBI" id="CHEBI:58210"/>
    </cofactor>
    <text evidence="1">Binds 1 FMN per subunit.</text>
</comment>
<comment type="pathway">
    <text evidence="1">Pyrimidine metabolism; UMP biosynthesis via de novo pathway; orotate from (S)-dihydroorotate (quinone route): step 1/1.</text>
</comment>
<comment type="subunit">
    <text evidence="1">Monomer.</text>
</comment>
<comment type="subcellular location">
    <subcellularLocation>
        <location evidence="1">Cell membrane</location>
        <topology evidence="1">Peripheral membrane protein</topology>
    </subcellularLocation>
</comment>
<comment type="similarity">
    <text evidence="1">Belongs to the dihydroorotate dehydrogenase family. Type 2 subfamily.</text>
</comment>
<accession>C1CX89</accession>
<evidence type="ECO:0000255" key="1">
    <source>
        <dbReference type="HAMAP-Rule" id="MF_00225"/>
    </source>
</evidence>
<protein>
    <recommendedName>
        <fullName evidence="1">Dihydroorotate dehydrogenase (quinone)</fullName>
        <ecNumber evidence="1">1.3.5.2</ecNumber>
    </recommendedName>
    <alternativeName>
        <fullName evidence="1">DHOdehase</fullName>
        <shortName evidence="1">DHOD</shortName>
        <shortName evidence="1">DHODase</shortName>
    </alternativeName>
    <alternativeName>
        <fullName evidence="1">Dihydroorotate oxidase</fullName>
    </alternativeName>
</protein>